<gene>
    <name type="primary">TDRD3</name>
</gene>
<feature type="chain" id="PRO_0000367246" description="Tudor domain-containing protein 3">
    <location>
        <begin position="1"/>
        <end position="722"/>
    </location>
</feature>
<feature type="domain" description="UBA" evidence="4">
    <location>
        <begin position="264"/>
        <end position="304"/>
    </location>
</feature>
<feature type="domain" description="Tudor" evidence="3">
    <location>
        <begin position="626"/>
        <end position="686"/>
    </location>
</feature>
<feature type="region of interest" description="Disordered" evidence="5">
    <location>
        <begin position="305"/>
        <end position="342"/>
    </location>
</feature>
<feature type="region of interest" description="Disordered" evidence="5">
    <location>
        <begin position="355"/>
        <end position="453"/>
    </location>
</feature>
<feature type="region of interest" description="Disordered" evidence="5">
    <location>
        <begin position="470"/>
        <end position="526"/>
    </location>
</feature>
<feature type="region of interest" description="Disordered" evidence="5">
    <location>
        <begin position="695"/>
        <end position="722"/>
    </location>
</feature>
<feature type="region of interest" description="EBM motif; may mediate interaction with the EJC" evidence="1">
    <location>
        <begin position="702"/>
        <end position="722"/>
    </location>
</feature>
<feature type="compositionally biased region" description="Polar residues" evidence="5">
    <location>
        <begin position="362"/>
        <end position="388"/>
    </location>
</feature>
<feature type="compositionally biased region" description="Basic and acidic residues" evidence="5">
    <location>
        <begin position="392"/>
        <end position="409"/>
    </location>
</feature>
<feature type="compositionally biased region" description="Basic and acidic residues" evidence="5">
    <location>
        <begin position="442"/>
        <end position="453"/>
    </location>
</feature>
<feature type="compositionally biased region" description="Basic and acidic residues" evidence="5">
    <location>
        <begin position="695"/>
        <end position="704"/>
    </location>
</feature>
<feature type="modified residue" description="Phosphoserine" evidence="2">
    <location>
        <position position="327"/>
    </location>
</feature>
<feature type="cross-link" description="Glycyl lysine isopeptide (Lys-Gly) (interchain with G-Cter in SUMO2)" evidence="2">
    <location>
        <position position="541"/>
    </location>
</feature>
<evidence type="ECO:0000250" key="1"/>
<evidence type="ECO:0000250" key="2">
    <source>
        <dbReference type="UniProtKB" id="Q9H7E2"/>
    </source>
</evidence>
<evidence type="ECO:0000255" key="3">
    <source>
        <dbReference type="PROSITE-ProRule" id="PRU00211"/>
    </source>
</evidence>
<evidence type="ECO:0000255" key="4">
    <source>
        <dbReference type="PROSITE-ProRule" id="PRU00212"/>
    </source>
</evidence>
<evidence type="ECO:0000256" key="5">
    <source>
        <dbReference type="SAM" id="MobiDB-lite"/>
    </source>
</evidence>
<dbReference type="EMBL" id="BC105432">
    <property type="protein sequence ID" value="AAI05433.1"/>
    <property type="molecule type" value="mRNA"/>
</dbReference>
<dbReference type="RefSeq" id="NP_001039891.1">
    <property type="nucleotide sequence ID" value="NM_001046426.2"/>
</dbReference>
<dbReference type="SMR" id="Q2HJG4"/>
<dbReference type="FunCoup" id="Q2HJG4">
    <property type="interactions" value="2360"/>
</dbReference>
<dbReference type="STRING" id="9913.ENSBTAP00000066670"/>
<dbReference type="PaxDb" id="9913-ENSBTAP00000012261"/>
<dbReference type="GeneID" id="537918"/>
<dbReference type="KEGG" id="bta:537918"/>
<dbReference type="CTD" id="81550"/>
<dbReference type="eggNOG" id="KOG3683">
    <property type="taxonomic scope" value="Eukaryota"/>
</dbReference>
<dbReference type="InParanoid" id="Q2HJG4"/>
<dbReference type="OrthoDB" id="434939at2759"/>
<dbReference type="Proteomes" id="UP000009136">
    <property type="component" value="Unplaced"/>
</dbReference>
<dbReference type="GO" id="GO:0005737">
    <property type="term" value="C:cytoplasm"/>
    <property type="evidence" value="ECO:0007669"/>
    <property type="project" value="UniProtKB-SubCell"/>
</dbReference>
<dbReference type="GO" id="GO:0005634">
    <property type="term" value="C:nucleus"/>
    <property type="evidence" value="ECO:0000250"/>
    <property type="project" value="UniProtKB"/>
</dbReference>
<dbReference type="GO" id="GO:0003682">
    <property type="term" value="F:chromatin binding"/>
    <property type="evidence" value="ECO:0000250"/>
    <property type="project" value="UniProtKB"/>
</dbReference>
<dbReference type="GO" id="GO:0140006">
    <property type="term" value="F:histone H3 reader activity"/>
    <property type="evidence" value="ECO:0000250"/>
    <property type="project" value="UniProtKB"/>
</dbReference>
<dbReference type="GO" id="GO:0003713">
    <property type="term" value="F:transcription coactivator activity"/>
    <property type="evidence" value="ECO:0000250"/>
    <property type="project" value="UniProtKB"/>
</dbReference>
<dbReference type="CDD" id="cd20413">
    <property type="entry name" value="Tudor_TDRD3"/>
    <property type="match status" value="1"/>
</dbReference>
<dbReference type="CDD" id="cd14282">
    <property type="entry name" value="UBA_TDRD3"/>
    <property type="match status" value="1"/>
</dbReference>
<dbReference type="FunFam" id="2.40.50.770:FF:000001">
    <property type="entry name" value="Tudor domain-containing protein 3"/>
    <property type="match status" value="1"/>
</dbReference>
<dbReference type="FunFam" id="1.10.8.10:FF:000038">
    <property type="entry name" value="tudor domain-containing protein 3 isoform X1"/>
    <property type="match status" value="1"/>
</dbReference>
<dbReference type="FunFam" id="2.30.30.140:FF:000046">
    <property type="entry name" value="tudor domain-containing protein 3 isoform X1"/>
    <property type="match status" value="1"/>
</dbReference>
<dbReference type="Gene3D" id="2.30.30.140">
    <property type="match status" value="1"/>
</dbReference>
<dbReference type="Gene3D" id="1.10.8.10">
    <property type="entry name" value="DNA helicase RuvA subunit, C-terminal domain"/>
    <property type="match status" value="1"/>
</dbReference>
<dbReference type="Gene3D" id="2.40.50.770">
    <property type="entry name" value="RecQ-mediated genome instability protein Rmi1, C-terminal domain"/>
    <property type="match status" value="1"/>
</dbReference>
<dbReference type="InterPro" id="IPR042470">
    <property type="entry name" value="RMI1_N_C_sf"/>
</dbReference>
<dbReference type="InterPro" id="IPR013894">
    <property type="entry name" value="RMI1_OB"/>
</dbReference>
<dbReference type="InterPro" id="IPR002999">
    <property type="entry name" value="Tudor"/>
</dbReference>
<dbReference type="InterPro" id="IPR047379">
    <property type="entry name" value="Tudor_TDRD3"/>
</dbReference>
<dbReference type="InterPro" id="IPR015940">
    <property type="entry name" value="UBA"/>
</dbReference>
<dbReference type="InterPro" id="IPR009060">
    <property type="entry name" value="UBA-like_sf"/>
</dbReference>
<dbReference type="InterPro" id="IPR041915">
    <property type="entry name" value="UBA_TDRD3"/>
</dbReference>
<dbReference type="PANTHER" id="PTHR13681">
    <property type="entry name" value="SURVIVAL OF MOTOR NEURON-RELATED-SPLICING FACTOR 30-RELATED"/>
    <property type="match status" value="1"/>
</dbReference>
<dbReference type="PANTHER" id="PTHR13681:SF24">
    <property type="entry name" value="TUDOR DOMAIN-CONTAINING PROTEIN 3"/>
    <property type="match status" value="1"/>
</dbReference>
<dbReference type="Pfam" id="PF08585">
    <property type="entry name" value="RMI1_N_C"/>
    <property type="match status" value="1"/>
</dbReference>
<dbReference type="Pfam" id="PF00567">
    <property type="entry name" value="TUDOR"/>
    <property type="match status" value="1"/>
</dbReference>
<dbReference type="Pfam" id="PF22562">
    <property type="entry name" value="UBA_7"/>
    <property type="match status" value="1"/>
</dbReference>
<dbReference type="SMART" id="SM01161">
    <property type="entry name" value="DUF1767"/>
    <property type="match status" value="1"/>
</dbReference>
<dbReference type="SMART" id="SM00333">
    <property type="entry name" value="TUDOR"/>
    <property type="match status" value="1"/>
</dbReference>
<dbReference type="SMART" id="SM00165">
    <property type="entry name" value="UBA"/>
    <property type="match status" value="1"/>
</dbReference>
<dbReference type="SUPFAM" id="SSF63748">
    <property type="entry name" value="Tudor/PWWP/MBT"/>
    <property type="match status" value="1"/>
</dbReference>
<dbReference type="SUPFAM" id="SSF46934">
    <property type="entry name" value="UBA-like"/>
    <property type="match status" value="1"/>
</dbReference>
<dbReference type="PROSITE" id="PS50304">
    <property type="entry name" value="TUDOR"/>
    <property type="match status" value="1"/>
</dbReference>
<dbReference type="PROSITE" id="PS50030">
    <property type="entry name" value="UBA"/>
    <property type="match status" value="1"/>
</dbReference>
<name>TDRD3_BOVIN</name>
<organism>
    <name type="scientific">Bos taurus</name>
    <name type="common">Bovine</name>
    <dbReference type="NCBI Taxonomy" id="9913"/>
    <lineage>
        <taxon>Eukaryota</taxon>
        <taxon>Metazoa</taxon>
        <taxon>Chordata</taxon>
        <taxon>Craniata</taxon>
        <taxon>Vertebrata</taxon>
        <taxon>Euteleostomi</taxon>
        <taxon>Mammalia</taxon>
        <taxon>Eutheria</taxon>
        <taxon>Laurasiatheria</taxon>
        <taxon>Artiodactyla</taxon>
        <taxon>Ruminantia</taxon>
        <taxon>Pecora</taxon>
        <taxon>Bovidae</taxon>
        <taxon>Bovinae</taxon>
        <taxon>Bos</taxon>
    </lineage>
</organism>
<reference key="1">
    <citation type="submission" date="2005-09" db="EMBL/GenBank/DDBJ databases">
        <authorList>
            <consortium name="NIH - Mammalian Gene Collection (MGC) project"/>
        </authorList>
    </citation>
    <scope>NUCLEOTIDE SEQUENCE [LARGE SCALE MRNA]</scope>
    <source>
        <strain>Hereford</strain>
        <tissue>Hypothalamus</tissue>
    </source>
</reference>
<comment type="function">
    <text evidence="2">Scaffolding protein that specifically recognizes and binds dimethylarginine-containing proteins. Plays a role in the regulation of translation of target mRNAs by binding Arg/Gly-rich motifs (GAR) in dimethylarginine-containing proteins. In nucleus, acts as a coactivator: recognizes and binds asymmetric dimethylation on the core histone tails associated with transcriptional activation (H3R17me2a and H4R3me2a) and recruits proteins at these arginine-methylated loci. In cytoplasm, acts as an antiviral factor that participates in the assembly of stress granules together with G3BP1.</text>
</comment>
<comment type="subunit">
    <text evidence="2">Component of mRNA stress granules. Interacts with FMR1, FXR1, FXR2, EWSR1, FUS, SERBP1, EEF1A1 and DDX3X or DDX3Y, and with the small nuclear ribonucleoprotein-associated proteins SNRPB and SNRPN. Interacts with 'Lys-48'-linked tetra-ubiquitin, but not with monoubiquitin or 'Lys-63'-linked ubiquitin chains. May interact with the exon junction complex (EJC) composed at least of CASC3, EIF4A3, MAGOH and RBM8A. Interacts with POLR2A (via the C-terminal domain (CTD)).</text>
</comment>
<comment type="subcellular location">
    <subcellularLocation>
        <location evidence="2">Cytoplasm</location>
    </subcellularLocation>
    <subcellularLocation>
        <location evidence="2">Nucleus</location>
    </subcellularLocation>
    <text evidence="2">Predominantly cytoplasmic. Associated with actively translating polyribosomes. Component of stress granules.</text>
</comment>
<comment type="domain">
    <text evidence="1">The Tudor domain specifically recognizes and binds asymmetric dimethylation of histone H3 'Arg-17' (H3R17me2a) and histones H4 'Arg-3', 2 tags for epigenetic transcriptional activation.</text>
</comment>
<proteinExistence type="evidence at transcript level"/>
<keyword id="KW-0156">Chromatin regulator</keyword>
<keyword id="KW-0963">Cytoplasm</keyword>
<keyword id="KW-1017">Isopeptide bond</keyword>
<keyword id="KW-0539">Nucleus</keyword>
<keyword id="KW-0597">Phosphoprotein</keyword>
<keyword id="KW-1185">Reference proteome</keyword>
<keyword id="KW-0832">Ubl conjugation</keyword>
<protein>
    <recommendedName>
        <fullName>Tudor domain-containing protein 3</fullName>
    </recommendedName>
</protein>
<sequence length="722" mass="80808">MAEAPGAALSRAGWYLSDEGIEACTSSPDKVNVNDIILIALNLEGPCVLQIQKIRNVAAPKDNEESQAAPRMLRLQMTDGHISCTAVEFSYLSKISLNTPPGTKVKLSGAVDIKNGFLLLNDSNTTVLGGEVEHLIEKWELQRSLSKHNRSNIGTEGGPPPFVPFGQKCVSHIQVDSRELDRRKTLQVTMPVKPPNDNDEFEKQRTAAIAEVAKSKETKTFGGGGGGARSNLNMHAAGNRNREILQKEKANKSEGKHEGVYRELVDEKALRHITEMGFSKEASRQALMDNGNNLEAALNVLLNSNKQKPVTGPPLRGKGKGRGRIRSEDEEELGNARPSAPSTLFDFLESKMGTLSVEEPKSQPQQLHQGQNRVSNTEQNGVKDNNQPRYLPRNDTRQPRNEKPPRFQRDTQNSKAVLEGSGLPRNRGSERPSTSSGSEGWAEERTKCDRSYSRYDRTKDTSYLLSSQHSDTVFKKRDNSMQSRSGKGPSYTEAKENPFPQESVDYNNHKRGKRENQTANSDHFYDRKPRTINNEAFSGVKIEKHFNVNTDYQHPVRMNSFIGVPNGETEMPLKGRRVGPIKPAGPIMASSCDDKIFYSSGPKRRSGPIKPEKVLESSIPMEYAKLWKSGDECLALYWEDNKFYRAEVEALHSSGMTAVVKFIDYGNYEEVLLSNIRPIQSEAWEEEGTYDQTLEFRRGGDGQPRRSTRPTQQFYQPPRARN</sequence>
<accession>Q2HJG4</accession>